<reference key="1">
    <citation type="journal article" date="2001" name="Lancet">
        <title>Whole genome sequencing of meticillin-resistant Staphylococcus aureus.</title>
        <authorList>
            <person name="Kuroda M."/>
            <person name="Ohta T."/>
            <person name="Uchiyama I."/>
            <person name="Baba T."/>
            <person name="Yuzawa H."/>
            <person name="Kobayashi I."/>
            <person name="Cui L."/>
            <person name="Oguchi A."/>
            <person name="Aoki K."/>
            <person name="Nagai Y."/>
            <person name="Lian J.-Q."/>
            <person name="Ito T."/>
            <person name="Kanamori M."/>
            <person name="Matsumaru H."/>
            <person name="Maruyama A."/>
            <person name="Murakami H."/>
            <person name="Hosoyama A."/>
            <person name="Mizutani-Ui Y."/>
            <person name="Takahashi N.K."/>
            <person name="Sawano T."/>
            <person name="Inoue R."/>
            <person name="Kaito C."/>
            <person name="Sekimizu K."/>
            <person name="Hirakawa H."/>
            <person name="Kuhara S."/>
            <person name="Goto S."/>
            <person name="Yabuzaki J."/>
            <person name="Kanehisa M."/>
            <person name="Yamashita A."/>
            <person name="Oshima K."/>
            <person name="Furuya K."/>
            <person name="Yoshino C."/>
            <person name="Shiba T."/>
            <person name="Hattori M."/>
            <person name="Ogasawara N."/>
            <person name="Hayashi H."/>
            <person name="Hiramatsu K."/>
        </authorList>
    </citation>
    <scope>NUCLEOTIDE SEQUENCE [LARGE SCALE GENOMIC DNA]</scope>
    <source>
        <strain>Mu50 / ATCC 700699</strain>
    </source>
</reference>
<gene>
    <name type="primary">clpC</name>
    <name type="ordered locus">SAV0525</name>
</gene>
<name>CLPC_STAAM</name>
<protein>
    <recommendedName>
        <fullName>ATP-dependent Clp protease ATP-binding subunit ClpC</fullName>
    </recommendedName>
</protein>
<sequence>MLFGRLTERAQRVLAHAQEEAIRLNHSNIGTEHLLLGLMKEPEGIAAKVLESFNITEDKVIEEVEKLIGHGQDHVGTLHYTPRAKKVIELSMDEARKLHHNFVGTEHILLGLIRENEGVAARVFANLDLNITKARAQVVKALGNPEMSNKNAQASKSNNTPTLDSLARDLTVIAKDGTLDPVIGRDKEITRVIEVLSRRTKNNPVLIGEPGVGKTAIAEGLAQAIVNNEVPETLKDKRVMSLDMGTVVAGTKYRGEFEERLKKVMEEIQQAGNVILFIDELHTLVGAGGAEGAIDASNILKPALARGELQCIGATTLDEYRKNIEKDAALERRFQPVQVDEPSVVDTVAILKGLRDRYEAHHRINISDEAIEAAVKLSNRYVSDRFLPDKAIDLIDEASSKVRLKSHTTPNNLKEIEQEIEKVKNEKDAAVHAQEFENAANLRDKQTKLEKQYEEAKNEWKNAQNGMSTSLSEEDIAEVIAGWTGIPLTKINETESEKLLSLEDTLHERVIGQKDAVNSISKAVRRARAGLKDPKRPIGSFIFLGPTGVGKTELARALAESMFGDDDAMIRVDMSEFMEKHAVSRLVGAPPGYVGHDDGGQLTEKVRRKPYSVILFDEIEKAHPDVFNILLQVLDDGHLTDTKGRTVDFRNTIIIMTSNVGAQELQDQRFAGFGGSSDGQDYETIRKTMLKELKNSFRPEFLNRVDDIIVFHKLTKEELKEIVTMMVNKLTNRLSEQNINIIVTDKAKDKIAEEGYDPEYGARPLIRAIQKTIEDNLSELILDGNQIEGKKVTVDHDGKEFKYDIAEQTSETKTPSQA</sequence>
<accession>Q99W78</accession>
<proteinExistence type="inferred from homology"/>
<keyword id="KW-0067">ATP-binding</keyword>
<keyword id="KW-0143">Chaperone</keyword>
<keyword id="KW-0547">Nucleotide-binding</keyword>
<keyword id="KW-0677">Repeat</keyword>
<keyword id="KW-0346">Stress response</keyword>
<evidence type="ECO:0000250" key="1"/>
<evidence type="ECO:0000255" key="2"/>
<evidence type="ECO:0000255" key="3">
    <source>
        <dbReference type="PROSITE-ProRule" id="PRU00217"/>
    </source>
</evidence>
<evidence type="ECO:0000255" key="4">
    <source>
        <dbReference type="PROSITE-ProRule" id="PRU01251"/>
    </source>
</evidence>
<evidence type="ECO:0000305" key="5"/>
<feature type="chain" id="PRO_0000269683" description="ATP-dependent Clp protease ATP-binding subunit ClpC">
    <location>
        <begin position="1"/>
        <end position="818"/>
    </location>
</feature>
<feature type="domain" description="Clp R" evidence="4">
    <location>
        <begin position="3"/>
        <end position="144"/>
    </location>
</feature>
<feature type="domain" description="UVR" evidence="3">
    <location>
        <begin position="417"/>
        <end position="452"/>
    </location>
</feature>
<feature type="region of interest" description="Repeat 1" evidence="4">
    <location>
        <begin position="6"/>
        <end position="71"/>
    </location>
</feature>
<feature type="region of interest" description="Repeat 2" evidence="4">
    <location>
        <begin position="80"/>
        <end position="144"/>
    </location>
</feature>
<feature type="region of interest" description="I">
    <location>
        <begin position="163"/>
        <end position="410"/>
    </location>
</feature>
<feature type="region of interest" description="II">
    <location>
        <begin position="471"/>
        <end position="662"/>
    </location>
</feature>
<feature type="binding site" evidence="2">
    <location>
        <begin position="208"/>
        <end position="215"/>
    </location>
    <ligand>
        <name>ATP</name>
        <dbReference type="ChEBI" id="CHEBI:30616"/>
    </ligand>
</feature>
<feature type="binding site" evidence="2">
    <location>
        <begin position="545"/>
        <end position="552"/>
    </location>
    <ligand>
        <name>ATP</name>
        <dbReference type="ChEBI" id="CHEBI:30616"/>
    </ligand>
</feature>
<organism>
    <name type="scientific">Staphylococcus aureus (strain Mu50 / ATCC 700699)</name>
    <dbReference type="NCBI Taxonomy" id="158878"/>
    <lineage>
        <taxon>Bacteria</taxon>
        <taxon>Bacillati</taxon>
        <taxon>Bacillota</taxon>
        <taxon>Bacilli</taxon>
        <taxon>Bacillales</taxon>
        <taxon>Staphylococcaceae</taxon>
        <taxon>Staphylococcus</taxon>
    </lineage>
</organism>
<dbReference type="EMBL" id="BA000017">
    <property type="protein sequence ID" value="BAB56687.1"/>
    <property type="molecule type" value="Genomic_DNA"/>
</dbReference>
<dbReference type="RefSeq" id="WP_000897132.1">
    <property type="nucleotide sequence ID" value="NC_002758.2"/>
</dbReference>
<dbReference type="SMR" id="Q99W78"/>
<dbReference type="KEGG" id="sav:SAV0525"/>
<dbReference type="HOGENOM" id="CLU_005070_4_1_9"/>
<dbReference type="PhylomeDB" id="Q99W78"/>
<dbReference type="Proteomes" id="UP000002481">
    <property type="component" value="Chromosome"/>
</dbReference>
<dbReference type="GO" id="GO:0005737">
    <property type="term" value="C:cytoplasm"/>
    <property type="evidence" value="ECO:0007669"/>
    <property type="project" value="TreeGrafter"/>
</dbReference>
<dbReference type="GO" id="GO:0005524">
    <property type="term" value="F:ATP binding"/>
    <property type="evidence" value="ECO:0007669"/>
    <property type="project" value="UniProtKB-KW"/>
</dbReference>
<dbReference type="GO" id="GO:0016887">
    <property type="term" value="F:ATP hydrolysis activity"/>
    <property type="evidence" value="ECO:0007669"/>
    <property type="project" value="InterPro"/>
</dbReference>
<dbReference type="GO" id="GO:0034605">
    <property type="term" value="P:cellular response to heat"/>
    <property type="evidence" value="ECO:0007669"/>
    <property type="project" value="TreeGrafter"/>
</dbReference>
<dbReference type="CDD" id="cd00009">
    <property type="entry name" value="AAA"/>
    <property type="match status" value="1"/>
</dbReference>
<dbReference type="CDD" id="cd19499">
    <property type="entry name" value="RecA-like_ClpB_Hsp104-like"/>
    <property type="match status" value="1"/>
</dbReference>
<dbReference type="FunFam" id="1.10.8.60:FF:000017">
    <property type="entry name" value="ATP-dependent chaperone ClpB"/>
    <property type="match status" value="1"/>
</dbReference>
<dbReference type="FunFam" id="1.10.8.60:FF:000011">
    <property type="entry name" value="ATP-dependent Clp protease ATP-binding subunit"/>
    <property type="match status" value="1"/>
</dbReference>
<dbReference type="FunFam" id="3.40.50.300:FF:000025">
    <property type="entry name" value="ATP-dependent Clp protease subunit"/>
    <property type="match status" value="1"/>
</dbReference>
<dbReference type="FunFam" id="3.40.50.300:FF:000010">
    <property type="entry name" value="Chaperone clpB 1, putative"/>
    <property type="match status" value="1"/>
</dbReference>
<dbReference type="Gene3D" id="1.10.8.60">
    <property type="match status" value="2"/>
</dbReference>
<dbReference type="Gene3D" id="1.10.1780.10">
    <property type="entry name" value="Clp, N-terminal domain"/>
    <property type="match status" value="1"/>
</dbReference>
<dbReference type="Gene3D" id="3.40.50.300">
    <property type="entry name" value="P-loop containing nucleotide triphosphate hydrolases"/>
    <property type="match status" value="2"/>
</dbReference>
<dbReference type="Gene3D" id="4.10.860.10">
    <property type="entry name" value="UVR domain"/>
    <property type="match status" value="1"/>
</dbReference>
<dbReference type="InterPro" id="IPR003593">
    <property type="entry name" value="AAA+_ATPase"/>
</dbReference>
<dbReference type="InterPro" id="IPR003959">
    <property type="entry name" value="ATPase_AAA_core"/>
</dbReference>
<dbReference type="InterPro" id="IPR019489">
    <property type="entry name" value="Clp_ATPase_C"/>
</dbReference>
<dbReference type="InterPro" id="IPR036628">
    <property type="entry name" value="Clp_N_dom_sf"/>
</dbReference>
<dbReference type="InterPro" id="IPR004176">
    <property type="entry name" value="Clp_R_dom"/>
</dbReference>
<dbReference type="InterPro" id="IPR001270">
    <property type="entry name" value="ClpA/B"/>
</dbReference>
<dbReference type="InterPro" id="IPR018368">
    <property type="entry name" value="ClpA/B_CS1"/>
</dbReference>
<dbReference type="InterPro" id="IPR028299">
    <property type="entry name" value="ClpA/B_CS2"/>
</dbReference>
<dbReference type="InterPro" id="IPR041546">
    <property type="entry name" value="ClpA/ClpB_AAA_lid"/>
</dbReference>
<dbReference type="InterPro" id="IPR050130">
    <property type="entry name" value="ClpA_ClpB"/>
</dbReference>
<dbReference type="InterPro" id="IPR027417">
    <property type="entry name" value="P-loop_NTPase"/>
</dbReference>
<dbReference type="InterPro" id="IPR001943">
    <property type="entry name" value="UVR_dom"/>
</dbReference>
<dbReference type="PANTHER" id="PTHR11638">
    <property type="entry name" value="ATP-DEPENDENT CLP PROTEASE"/>
    <property type="match status" value="1"/>
</dbReference>
<dbReference type="PANTHER" id="PTHR11638:SF18">
    <property type="entry name" value="HEAT SHOCK PROTEIN 104"/>
    <property type="match status" value="1"/>
</dbReference>
<dbReference type="Pfam" id="PF00004">
    <property type="entry name" value="AAA"/>
    <property type="match status" value="1"/>
</dbReference>
<dbReference type="Pfam" id="PF07724">
    <property type="entry name" value="AAA_2"/>
    <property type="match status" value="1"/>
</dbReference>
<dbReference type="Pfam" id="PF17871">
    <property type="entry name" value="AAA_lid_9"/>
    <property type="match status" value="1"/>
</dbReference>
<dbReference type="Pfam" id="PF02861">
    <property type="entry name" value="Clp_N"/>
    <property type="match status" value="2"/>
</dbReference>
<dbReference type="Pfam" id="PF10431">
    <property type="entry name" value="ClpB_D2-small"/>
    <property type="match status" value="1"/>
</dbReference>
<dbReference type="PRINTS" id="PR00300">
    <property type="entry name" value="CLPPROTEASEA"/>
</dbReference>
<dbReference type="SMART" id="SM00382">
    <property type="entry name" value="AAA"/>
    <property type="match status" value="2"/>
</dbReference>
<dbReference type="SMART" id="SM01086">
    <property type="entry name" value="ClpB_D2-small"/>
    <property type="match status" value="1"/>
</dbReference>
<dbReference type="SUPFAM" id="SSF81923">
    <property type="entry name" value="Double Clp-N motif"/>
    <property type="match status" value="1"/>
</dbReference>
<dbReference type="SUPFAM" id="SSF52540">
    <property type="entry name" value="P-loop containing nucleoside triphosphate hydrolases"/>
    <property type="match status" value="2"/>
</dbReference>
<dbReference type="PROSITE" id="PS51903">
    <property type="entry name" value="CLP_R"/>
    <property type="match status" value="1"/>
</dbReference>
<dbReference type="PROSITE" id="PS00870">
    <property type="entry name" value="CLPAB_1"/>
    <property type="match status" value="1"/>
</dbReference>
<dbReference type="PROSITE" id="PS00871">
    <property type="entry name" value="CLPAB_2"/>
    <property type="match status" value="1"/>
</dbReference>
<dbReference type="PROSITE" id="PS50151">
    <property type="entry name" value="UVR"/>
    <property type="match status" value="1"/>
</dbReference>
<comment type="function">
    <text evidence="1">Required for growth at high temperatures, probably by acting as a chaperone during heat shock and targeting heat-denatured proteins for degradation by ClpP.</text>
</comment>
<comment type="similarity">
    <text evidence="5">Belongs to the ClpA/ClpB family. ClpC subfamily.</text>
</comment>